<gene>
    <name evidence="1" type="primary">rnp4</name>
    <name type="ordered locus">Ta0176</name>
</gene>
<feature type="chain" id="PRO_0000153865" description="Ribonuclease P protein component 4">
    <location>
        <begin position="1"/>
        <end position="91"/>
    </location>
</feature>
<feature type="binding site" evidence="1">
    <location>
        <position position="55"/>
    </location>
    <ligand>
        <name>Zn(2+)</name>
        <dbReference type="ChEBI" id="CHEBI:29105"/>
    </ligand>
</feature>
<feature type="binding site" evidence="1">
    <location>
        <position position="58"/>
    </location>
    <ligand>
        <name>Zn(2+)</name>
        <dbReference type="ChEBI" id="CHEBI:29105"/>
    </ligand>
</feature>
<feature type="binding site" evidence="1">
    <location>
        <position position="78"/>
    </location>
    <ligand>
        <name>Zn(2+)</name>
        <dbReference type="ChEBI" id="CHEBI:29105"/>
    </ligand>
</feature>
<feature type="binding site" evidence="1">
    <location>
        <position position="81"/>
    </location>
    <ligand>
        <name>Zn(2+)</name>
        <dbReference type="ChEBI" id="CHEBI:29105"/>
    </ligand>
</feature>
<keyword id="KW-0963">Cytoplasm</keyword>
<keyword id="KW-0255">Endonuclease</keyword>
<keyword id="KW-0378">Hydrolase</keyword>
<keyword id="KW-0479">Metal-binding</keyword>
<keyword id="KW-0540">Nuclease</keyword>
<keyword id="KW-1185">Reference proteome</keyword>
<keyword id="KW-0819">tRNA processing</keyword>
<keyword id="KW-0862">Zinc</keyword>
<comment type="function">
    <text evidence="1">Part of ribonuclease P, a protein complex that generates mature tRNA molecules by cleaving their 5'-ends.</text>
</comment>
<comment type="catalytic activity">
    <reaction evidence="1">
        <text>Endonucleolytic cleavage of RNA, removing 5'-extranucleotides from tRNA precursor.</text>
        <dbReference type="EC" id="3.1.26.5"/>
    </reaction>
</comment>
<comment type="cofactor">
    <cofactor evidence="1">
        <name>Zn(2+)</name>
        <dbReference type="ChEBI" id="CHEBI:29105"/>
    </cofactor>
    <text evidence="1">Binds 1 zinc ion per subunit.</text>
</comment>
<comment type="subunit">
    <text evidence="1">Consists of a catalytic RNA component and at least 4-5 protein subunits.</text>
</comment>
<comment type="subcellular location">
    <subcellularLocation>
        <location evidence="1">Cytoplasm</location>
    </subcellularLocation>
</comment>
<comment type="similarity">
    <text evidence="1">Belongs to the eukaryotic/archaeal RNase P protein component 4 family.</text>
</comment>
<comment type="sequence caution" evidence="2">
    <conflict type="erroneous initiation">
        <sequence resource="EMBL-CDS" id="CAC11322"/>
    </conflict>
    <text>Extended N-terminus.</text>
</comment>
<proteinExistence type="inferred from homology"/>
<organism>
    <name type="scientific">Thermoplasma acidophilum (strain ATCC 25905 / DSM 1728 / JCM 9062 / NBRC 15155 / AMRC-C165)</name>
    <dbReference type="NCBI Taxonomy" id="273075"/>
    <lineage>
        <taxon>Archaea</taxon>
        <taxon>Methanobacteriati</taxon>
        <taxon>Thermoplasmatota</taxon>
        <taxon>Thermoplasmata</taxon>
        <taxon>Thermoplasmatales</taxon>
        <taxon>Thermoplasmataceae</taxon>
        <taxon>Thermoplasma</taxon>
    </lineage>
</organism>
<protein>
    <recommendedName>
        <fullName evidence="1">Ribonuclease P protein component 4</fullName>
        <shortName evidence="1">RNase P component 4</shortName>
        <ecNumber evidence="1">3.1.26.5</ecNumber>
    </recommendedName>
    <alternativeName>
        <fullName evidence="1">Rpp21</fullName>
    </alternativeName>
</protein>
<dbReference type="EC" id="3.1.26.5" evidence="1"/>
<dbReference type="EMBL" id="AL445063">
    <property type="protein sequence ID" value="CAC11322.1"/>
    <property type="status" value="ALT_INIT"/>
    <property type="molecule type" value="Genomic_DNA"/>
</dbReference>
<dbReference type="RefSeq" id="WP_048161456.1">
    <property type="nucleotide sequence ID" value="NC_002578.1"/>
</dbReference>
<dbReference type="SMR" id="Q9HLQ1"/>
<dbReference type="STRING" id="273075.gene:9571390"/>
<dbReference type="PaxDb" id="273075-Ta0176m"/>
<dbReference type="EnsemblBacteria" id="CAC11322">
    <property type="protein sequence ID" value="CAC11322"/>
    <property type="gene ID" value="CAC11322"/>
</dbReference>
<dbReference type="KEGG" id="tac:Ta0176"/>
<dbReference type="eggNOG" id="arCOG04345">
    <property type="taxonomic scope" value="Archaea"/>
</dbReference>
<dbReference type="HOGENOM" id="CLU_1954763_0_0_2"/>
<dbReference type="InParanoid" id="Q9HLQ1"/>
<dbReference type="Proteomes" id="UP000001024">
    <property type="component" value="Chromosome"/>
</dbReference>
<dbReference type="GO" id="GO:0005737">
    <property type="term" value="C:cytoplasm"/>
    <property type="evidence" value="ECO:0007669"/>
    <property type="project" value="UniProtKB-SubCell"/>
</dbReference>
<dbReference type="GO" id="GO:0030677">
    <property type="term" value="C:ribonuclease P complex"/>
    <property type="evidence" value="ECO:0007669"/>
    <property type="project" value="UniProtKB-UniRule"/>
</dbReference>
<dbReference type="GO" id="GO:0004526">
    <property type="term" value="F:ribonuclease P activity"/>
    <property type="evidence" value="ECO:0007669"/>
    <property type="project" value="UniProtKB-UniRule"/>
</dbReference>
<dbReference type="GO" id="GO:0008270">
    <property type="term" value="F:zinc ion binding"/>
    <property type="evidence" value="ECO:0007669"/>
    <property type="project" value="UniProtKB-UniRule"/>
</dbReference>
<dbReference type="GO" id="GO:0001682">
    <property type="term" value="P:tRNA 5'-leader removal"/>
    <property type="evidence" value="ECO:0007669"/>
    <property type="project" value="UniProtKB-UniRule"/>
</dbReference>
<dbReference type="HAMAP" id="MF_00757">
    <property type="entry name" value="RNase_P_4"/>
    <property type="match status" value="1"/>
</dbReference>
<dbReference type="InterPro" id="IPR016432">
    <property type="entry name" value="RNP4"/>
</dbReference>
<dbReference type="PIRSF" id="PIRSF004878">
    <property type="entry name" value="RNase_P_4"/>
    <property type="match status" value="1"/>
</dbReference>
<sequence>MLITKKDVEYTARKRIEKLYDFAIRTGDRRYIIEMEHIAQRMDITLPANIKRGYCKKCKTPYRNQVVRIKKNLVTVKCPVCDDIRRFQISR</sequence>
<evidence type="ECO:0000255" key="1">
    <source>
        <dbReference type="HAMAP-Rule" id="MF_00757"/>
    </source>
</evidence>
<evidence type="ECO:0000305" key="2"/>
<reference key="1">
    <citation type="journal article" date="2000" name="Nature">
        <title>The genome sequence of the thermoacidophilic scavenger Thermoplasma acidophilum.</title>
        <authorList>
            <person name="Ruepp A."/>
            <person name="Graml W."/>
            <person name="Santos-Martinez M.-L."/>
            <person name="Koretke K.K."/>
            <person name="Volker C."/>
            <person name="Mewes H.-W."/>
            <person name="Frishman D."/>
            <person name="Stocker S."/>
            <person name="Lupas A.N."/>
            <person name="Baumeister W."/>
        </authorList>
    </citation>
    <scope>NUCLEOTIDE SEQUENCE [LARGE SCALE GENOMIC DNA]</scope>
    <source>
        <strain>ATCC 25905 / DSM 1728 / JCM 9062 / NBRC 15155 / AMRC-C165</strain>
    </source>
</reference>
<name>RNP4_THEAC</name>
<accession>Q9HLQ1</accession>